<gene>
    <name evidence="9" type="primary">Pde3a</name>
</gene>
<sequence>MAVRGEAAQDLAKPGLGGASPARVARGNHRHRGESSPSPRGSGCCWRALALQPLRRSPQLSSALCAGSLSVLLALLVRLVGGEVGGELEKSQEAAAEEEEEEGARGGVFPGPRGGAPGGGAQLSPWLQPAALLFSLLCAFFWMGLCLLRAGVRLPLAVALLAACCAGEALVQLSLGVGDGRLLSLPAAGVLLSCLGGATWLVLRLRLGVLMVAWTSVLRTVALVSLERFKVAWRPYLAYLAAVLGLLLARYAEQILPQCSGPAPPRERFGSQLSARTKEEIPGWKRRRRSSSVVAGEMSGCSGKSHRRTSLPCIPREQLMGHSEWDHKRGPRGSQSGTSITVDIAVMGEAHGLITDLLADPSLPPNVCTSLRAVSNLLSTQLTFQAIHKPRVNPTVTFSENYTCSDSEEGLEKDKQAISKRLRRSLPPGLLRRVSSTWTTTTSATGLPTLEPAPVRRDRSASIKPHEAPSPSAVNPDSWNAPGLTTLTKSRSFTSSYAVSAANHVKAKKQNRPGGLAKISPVPSPSSSPPQGSPASSPVSNSASQQFPESPEVTIKRGPGSHRALTYTQSAPDLSPQIPPPSVICSSCGRPYSQGNPADGPSERSGPAMLKPNRTDDTSQVTSDYETNNNSDSSDILQNEEEAECQREPQRKASACGTYTSQTMIFLDKPILAPEPLVMDNLDSIMDQLNTWNFPIFDLMENIGRKCGRILSQVSYRLFEDMGLFEAFKIPVREFMNYFHALEIGYRDIPYHNRIHATDVLHAVWYLTTQPIPGLPSVIGDHGSASDSDSDSGFTHGHMGYVFSKMYHVPDDKYGCLSGNIPALELMALYVAAAMHDYDHPGRTNAFLVATSAPQAVLYNDRSVLENHHAAAAWNLFMSRPEYNFLVNLDHVEFKHFRFLVIEAILATDLKKHFDFVAKFNAKVNDDVGIDWTNENDRLLVCQMCIKLADINGPAKCKELHLRWTEGIASEFYEQGDEEASLGLPISPFMDRSAPQLANLQESFISHIVGPLCHSYDSAGLMPGKWVDDSDDSGDTDDPEEEEEEAETPHEDEACESSIAPRKKSFKRRRIYCQITQHLLQNHMMWKKVIEEEQCLSGTENQSLDQVPLQHPSEQIQAIKEEEEEKGKPRAEETLAPQPDL</sequence>
<dbReference type="EC" id="3.1.4.17" evidence="6"/>
<dbReference type="EMBL" id="AF099187">
    <property type="protein sequence ID" value="AAD16300.1"/>
    <property type="molecule type" value="mRNA"/>
</dbReference>
<dbReference type="CCDS" id="CCDS20676.1"/>
<dbReference type="RefSeq" id="NP_061249.1">
    <property type="nucleotide sequence ID" value="NM_018779.2"/>
</dbReference>
<dbReference type="SMR" id="Q9Z0X4"/>
<dbReference type="BioGRID" id="207686">
    <property type="interactions" value="4"/>
</dbReference>
<dbReference type="FunCoup" id="Q9Z0X4">
    <property type="interactions" value="641"/>
</dbReference>
<dbReference type="IntAct" id="Q9Z0X4">
    <property type="interactions" value="2"/>
</dbReference>
<dbReference type="MINT" id="Q9Z0X4"/>
<dbReference type="STRING" id="10090.ENSMUSP00000038749"/>
<dbReference type="iPTMnet" id="Q9Z0X4"/>
<dbReference type="PhosphoSitePlus" id="Q9Z0X4"/>
<dbReference type="jPOST" id="Q9Z0X4"/>
<dbReference type="PaxDb" id="10090-ENSMUSP00000038749"/>
<dbReference type="ProteomicsDB" id="301779"/>
<dbReference type="Antibodypedia" id="2869">
    <property type="antibodies" value="252 antibodies from 31 providers"/>
</dbReference>
<dbReference type="DNASU" id="54611"/>
<dbReference type="Ensembl" id="ENSMUST00000043259.10">
    <property type="protein sequence ID" value="ENSMUSP00000038749.8"/>
    <property type="gene ID" value="ENSMUSG00000041741.11"/>
</dbReference>
<dbReference type="GeneID" id="54611"/>
<dbReference type="KEGG" id="mmu:54611"/>
<dbReference type="UCSC" id="uc009eon.1">
    <property type="organism name" value="mouse"/>
</dbReference>
<dbReference type="AGR" id="MGI:1860764"/>
<dbReference type="CTD" id="5139"/>
<dbReference type="MGI" id="MGI:1860764">
    <property type="gene designation" value="Pde3a"/>
</dbReference>
<dbReference type="VEuPathDB" id="HostDB:ENSMUSG00000041741"/>
<dbReference type="eggNOG" id="ENOG502QSV8">
    <property type="taxonomic scope" value="Eukaryota"/>
</dbReference>
<dbReference type="GeneTree" id="ENSGT00940000156628"/>
<dbReference type="HOGENOM" id="CLU_008844_0_0_1"/>
<dbReference type="InParanoid" id="Q9Z0X4"/>
<dbReference type="OMA" id="CIPREQI"/>
<dbReference type="OrthoDB" id="546632at2759"/>
<dbReference type="PhylomeDB" id="Q9Z0X4"/>
<dbReference type="TreeFam" id="TF329631"/>
<dbReference type="Reactome" id="R-MMU-418555">
    <property type="pathway name" value="G alpha (s) signalling events"/>
</dbReference>
<dbReference type="SABIO-RK" id="Q9Z0X4"/>
<dbReference type="BioGRID-ORCS" id="54611">
    <property type="hits" value="2 hits in 78 CRISPR screens"/>
</dbReference>
<dbReference type="ChiTaRS" id="Pde3a">
    <property type="organism name" value="mouse"/>
</dbReference>
<dbReference type="PRO" id="PR:Q9Z0X4"/>
<dbReference type="Proteomes" id="UP000000589">
    <property type="component" value="Chromosome 6"/>
</dbReference>
<dbReference type="RNAct" id="Q9Z0X4">
    <property type="molecule type" value="protein"/>
</dbReference>
<dbReference type="Bgee" id="ENSMUSG00000041741">
    <property type="expression patterns" value="Expressed in secondary oocyte and 120 other cell types or tissues"/>
</dbReference>
<dbReference type="ExpressionAtlas" id="Q9Z0X4">
    <property type="expression patterns" value="baseline and differential"/>
</dbReference>
<dbReference type="GO" id="GO:0005829">
    <property type="term" value="C:cytosol"/>
    <property type="evidence" value="ECO:0000314"/>
    <property type="project" value="MGI"/>
</dbReference>
<dbReference type="GO" id="GO:0016020">
    <property type="term" value="C:membrane"/>
    <property type="evidence" value="ECO:0000314"/>
    <property type="project" value="MGI"/>
</dbReference>
<dbReference type="GO" id="GO:0004119">
    <property type="term" value="F:3',5'-cGMP-inhibited cyclic-nucleotide phosphodiesterase activity"/>
    <property type="evidence" value="ECO:0007669"/>
    <property type="project" value="Ensembl"/>
</dbReference>
<dbReference type="GO" id="GO:0004115">
    <property type="term" value="F:3',5'-cyclic-AMP phosphodiesterase activity"/>
    <property type="evidence" value="ECO:0000314"/>
    <property type="project" value="MGI"/>
</dbReference>
<dbReference type="GO" id="GO:0047555">
    <property type="term" value="F:3',5'-cyclic-GMP phosphodiesterase activity"/>
    <property type="evidence" value="ECO:0007669"/>
    <property type="project" value="Ensembl"/>
</dbReference>
<dbReference type="GO" id="GO:0099130">
    <property type="term" value="F:estrogen binding"/>
    <property type="evidence" value="ECO:0000250"/>
    <property type="project" value="UniProtKB"/>
</dbReference>
<dbReference type="GO" id="GO:0046872">
    <property type="term" value="F:metal ion binding"/>
    <property type="evidence" value="ECO:0007669"/>
    <property type="project" value="UniProtKB-KW"/>
</dbReference>
<dbReference type="GO" id="GO:0030284">
    <property type="term" value="F:nuclear estrogen receptor activity"/>
    <property type="evidence" value="ECO:0007669"/>
    <property type="project" value="Ensembl"/>
</dbReference>
<dbReference type="GO" id="GO:0097190">
    <property type="term" value="P:apoptotic signaling pathway"/>
    <property type="evidence" value="ECO:0000250"/>
    <property type="project" value="UniProtKB"/>
</dbReference>
<dbReference type="GO" id="GO:0071321">
    <property type="term" value="P:cellular response to cGMP"/>
    <property type="evidence" value="ECO:0007669"/>
    <property type="project" value="Ensembl"/>
</dbReference>
<dbReference type="GO" id="GO:0071560">
    <property type="term" value="P:cellular response to transforming growth factor beta stimulus"/>
    <property type="evidence" value="ECO:0007669"/>
    <property type="project" value="Ensembl"/>
</dbReference>
<dbReference type="GO" id="GO:0019934">
    <property type="term" value="P:cGMP-mediated signaling"/>
    <property type="evidence" value="ECO:0007669"/>
    <property type="project" value="Ensembl"/>
</dbReference>
<dbReference type="GO" id="GO:0106072">
    <property type="term" value="P:negative regulation of adenylate cyclase-activating G protein-coupled receptor signaling pathway"/>
    <property type="evidence" value="ECO:0007669"/>
    <property type="project" value="Ensembl"/>
</dbReference>
<dbReference type="GO" id="GO:0043066">
    <property type="term" value="P:negative regulation of apoptotic process"/>
    <property type="evidence" value="ECO:0007669"/>
    <property type="project" value="Ensembl"/>
</dbReference>
<dbReference type="GO" id="GO:0141162">
    <property type="term" value="P:negative regulation of cAMP/PKA signal transduction"/>
    <property type="evidence" value="ECO:0007669"/>
    <property type="project" value="Ensembl"/>
</dbReference>
<dbReference type="GO" id="GO:0043116">
    <property type="term" value="P:negative regulation of vascular permeability"/>
    <property type="evidence" value="ECO:0007669"/>
    <property type="project" value="Ensembl"/>
</dbReference>
<dbReference type="GO" id="GO:0048599">
    <property type="term" value="P:oocyte development"/>
    <property type="evidence" value="ECO:0000316"/>
    <property type="project" value="MGI"/>
</dbReference>
<dbReference type="GO" id="GO:0001556">
    <property type="term" value="P:oocyte maturation"/>
    <property type="evidence" value="ECO:0000314"/>
    <property type="project" value="MGI"/>
</dbReference>
<dbReference type="GO" id="GO:0060282">
    <property type="term" value="P:positive regulation of oocyte development"/>
    <property type="evidence" value="ECO:0000316"/>
    <property type="project" value="MGI"/>
</dbReference>
<dbReference type="GO" id="GO:0043117">
    <property type="term" value="P:positive regulation of vascular permeability"/>
    <property type="evidence" value="ECO:0007669"/>
    <property type="project" value="Ensembl"/>
</dbReference>
<dbReference type="GO" id="GO:0040020">
    <property type="term" value="P:regulation of meiotic nuclear division"/>
    <property type="evidence" value="ECO:0000314"/>
    <property type="project" value="MGI"/>
</dbReference>
<dbReference type="GO" id="GO:0060700">
    <property type="term" value="P:regulation of ribonuclease activity"/>
    <property type="evidence" value="ECO:0000250"/>
    <property type="project" value="UniProtKB"/>
</dbReference>
<dbReference type="GO" id="GO:0009410">
    <property type="term" value="P:response to xenobiotic stimulus"/>
    <property type="evidence" value="ECO:0000314"/>
    <property type="project" value="MGI"/>
</dbReference>
<dbReference type="CDD" id="cd00077">
    <property type="entry name" value="HDc"/>
    <property type="match status" value="1"/>
</dbReference>
<dbReference type="FunFam" id="1.10.1300.10:FF:000008">
    <property type="entry name" value="Phosphodiesterase"/>
    <property type="match status" value="1"/>
</dbReference>
<dbReference type="Gene3D" id="1.10.1300.10">
    <property type="entry name" value="3'5'-cyclic nucleotide phosphodiesterase, catalytic domain"/>
    <property type="match status" value="1"/>
</dbReference>
<dbReference type="InterPro" id="IPR003607">
    <property type="entry name" value="HD/PDEase_dom"/>
</dbReference>
<dbReference type="InterPro" id="IPR002073">
    <property type="entry name" value="PDEase_catalytic_dom"/>
</dbReference>
<dbReference type="InterPro" id="IPR036971">
    <property type="entry name" value="PDEase_catalytic_dom_sf"/>
</dbReference>
<dbReference type="InterPro" id="IPR023174">
    <property type="entry name" value="PDEase_CS"/>
</dbReference>
<dbReference type="PANTHER" id="PTHR11347">
    <property type="entry name" value="CYCLIC NUCLEOTIDE PHOSPHODIESTERASE"/>
    <property type="match status" value="1"/>
</dbReference>
<dbReference type="Pfam" id="PF00233">
    <property type="entry name" value="PDEase_I"/>
    <property type="match status" value="1"/>
</dbReference>
<dbReference type="SMART" id="SM00471">
    <property type="entry name" value="HDc"/>
    <property type="match status" value="1"/>
</dbReference>
<dbReference type="SUPFAM" id="SSF109604">
    <property type="entry name" value="HD-domain/PDEase-like"/>
    <property type="match status" value="1"/>
</dbReference>
<dbReference type="PROSITE" id="PS00126">
    <property type="entry name" value="PDEASE_I_1"/>
    <property type="match status" value="1"/>
</dbReference>
<dbReference type="PROSITE" id="PS51845">
    <property type="entry name" value="PDEASE_I_2"/>
    <property type="match status" value="1"/>
</dbReference>
<comment type="function">
    <text evidence="2 6">Cyclic nucleotide phosphodiesterase with specificity for the second messengers cAMP and cGMP, which are key regulators of many important physiological processes (PubMed:11420239). Also has activity toward cUMP (By similarity). Independently of its catalytic activity it is part of an E2/17beta-estradiol-induced pro-apoptotic signaling pathway. E2 stabilizes the PDE3A/SLFN12 complex in the cytosol, promoting the dephosphorylation of SLFN12 and activating its pro-apoptotic ribosomal RNA/rRNA ribonuclease activity. This apoptotic pathway might be relevant in tissues with high concentration of E2 and be for instance involved in placenta remodeling (By similarity).</text>
</comment>
<comment type="catalytic activity">
    <reaction evidence="6">
        <text>a nucleoside 3',5'-cyclic phosphate + H2O = a nucleoside 5'-phosphate + H(+)</text>
        <dbReference type="Rhea" id="RHEA:14653"/>
        <dbReference type="ChEBI" id="CHEBI:15377"/>
        <dbReference type="ChEBI" id="CHEBI:15378"/>
        <dbReference type="ChEBI" id="CHEBI:57867"/>
        <dbReference type="ChEBI" id="CHEBI:58464"/>
        <dbReference type="EC" id="3.1.4.17"/>
    </reaction>
    <physiologicalReaction direction="left-to-right" evidence="8">
        <dbReference type="Rhea" id="RHEA:14654"/>
    </physiologicalReaction>
</comment>
<comment type="catalytic activity">
    <reaction evidence="6">
        <text>3',5'-cyclic AMP + H2O = AMP + H(+)</text>
        <dbReference type="Rhea" id="RHEA:25277"/>
        <dbReference type="ChEBI" id="CHEBI:15377"/>
        <dbReference type="ChEBI" id="CHEBI:15378"/>
        <dbReference type="ChEBI" id="CHEBI:58165"/>
        <dbReference type="ChEBI" id="CHEBI:456215"/>
    </reaction>
    <physiologicalReaction direction="left-to-right" evidence="8">
        <dbReference type="Rhea" id="RHEA:25278"/>
    </physiologicalReaction>
</comment>
<comment type="catalytic activity">
    <reaction evidence="2">
        <text>3',5'-cyclic GMP + H2O = GMP + H(+)</text>
        <dbReference type="Rhea" id="RHEA:16957"/>
        <dbReference type="ChEBI" id="CHEBI:15377"/>
        <dbReference type="ChEBI" id="CHEBI:15378"/>
        <dbReference type="ChEBI" id="CHEBI:57746"/>
        <dbReference type="ChEBI" id="CHEBI:58115"/>
    </reaction>
    <physiologicalReaction direction="left-to-right" evidence="2">
        <dbReference type="Rhea" id="RHEA:16958"/>
    </physiologicalReaction>
</comment>
<comment type="catalytic activity">
    <reaction evidence="2">
        <text>3',5'-cyclic UMP + H2O = UMP + H(+)</text>
        <dbReference type="Rhea" id="RHEA:70575"/>
        <dbReference type="ChEBI" id="CHEBI:15377"/>
        <dbReference type="ChEBI" id="CHEBI:15378"/>
        <dbReference type="ChEBI" id="CHEBI:57865"/>
        <dbReference type="ChEBI" id="CHEBI:184387"/>
    </reaction>
    <physiologicalReaction direction="left-to-right" evidence="2">
        <dbReference type="Rhea" id="RHEA:70576"/>
    </physiologicalReaction>
</comment>
<comment type="cofactor">
    <cofactor evidence="2">
        <name>Mn(2+)</name>
        <dbReference type="ChEBI" id="CHEBI:29035"/>
    </cofactor>
    <text evidence="2">Binds 2 divalent metal cations per subunit.</text>
</comment>
<comment type="cofactor">
    <cofactor evidence="2">
        <name>Mg(2+)</name>
        <dbReference type="ChEBI" id="CHEBI:18420"/>
    </cofactor>
    <text evidence="2">Binds 2 divalent metal cations per subunit.</text>
</comment>
<comment type="activity regulation">
    <text evidence="2">Inhibited by cGMP.</text>
</comment>
<comment type="biophysicochemical properties">
    <kinetics>
        <KM evidence="6">0.2 uM for 3',5'-cyclic AMP</KM>
    </kinetics>
</comment>
<comment type="subcellular location">
    <subcellularLocation>
        <location evidence="6">Membrane</location>
        <topology evidence="3">Multi-pass membrane protein</topology>
    </subcellularLocation>
    <subcellularLocation>
        <location evidence="2">Cytoplasm</location>
        <location evidence="2">Cytosol</location>
    </subcellularLocation>
</comment>
<comment type="similarity">
    <text evidence="7">Belongs to the cyclic nucleotide phosphodiesterase family. PDE3 subfamily.</text>
</comment>
<protein>
    <recommendedName>
        <fullName evidence="8">cGMP-inhibited 3',5'-cyclic phosphodiesterase 3A</fullName>
        <ecNumber evidence="6">3.1.4.17</ecNumber>
    </recommendedName>
    <alternativeName>
        <fullName>Cyclic GMP-inhibited phosphodiesterase A</fullName>
        <shortName>CGI-PDE A</shortName>
    </alternativeName>
</protein>
<feature type="chain" id="PRO_0000198800" description="cGMP-inhibited 3',5'-cyclic phosphodiesterase 3A">
    <location>
        <begin position="1"/>
        <end position="1141"/>
    </location>
</feature>
<feature type="transmembrane region" description="Helical" evidence="3">
    <location>
        <begin position="62"/>
        <end position="82"/>
    </location>
</feature>
<feature type="transmembrane region" description="Helical" evidence="3">
    <location>
        <begin position="127"/>
        <end position="147"/>
    </location>
</feature>
<feature type="transmembrane region" description="Helical" evidence="3">
    <location>
        <begin position="157"/>
        <end position="177"/>
    </location>
</feature>
<feature type="transmembrane region" description="Helical" evidence="3">
    <location>
        <begin position="182"/>
        <end position="202"/>
    </location>
</feature>
<feature type="transmembrane region" description="Helical" evidence="3">
    <location>
        <begin position="207"/>
        <end position="227"/>
    </location>
</feature>
<feature type="transmembrane region" description="Helical" evidence="3">
    <location>
        <begin position="229"/>
        <end position="249"/>
    </location>
</feature>
<feature type="domain" description="PDEase" evidence="4">
    <location>
        <begin position="674"/>
        <end position="1093"/>
    </location>
</feature>
<feature type="region of interest" description="Disordered" evidence="5">
    <location>
        <begin position="1"/>
        <end position="42"/>
    </location>
</feature>
<feature type="region of interest" description="Disordered" evidence="5">
    <location>
        <begin position="90"/>
        <end position="111"/>
    </location>
</feature>
<feature type="region of interest" description="Disordered" evidence="5">
    <location>
        <begin position="433"/>
        <end position="483"/>
    </location>
</feature>
<feature type="region of interest" description="Disordered" evidence="5">
    <location>
        <begin position="505"/>
        <end position="654"/>
    </location>
</feature>
<feature type="region of interest" description="Interaction with SLFN12" evidence="2">
    <location>
        <begin position="669"/>
        <end position="1141"/>
    </location>
</feature>
<feature type="region of interest" description="Disordered" evidence="5">
    <location>
        <begin position="1024"/>
        <end position="1060"/>
    </location>
</feature>
<feature type="region of interest" description="Disordered" evidence="5">
    <location>
        <begin position="1120"/>
        <end position="1141"/>
    </location>
</feature>
<feature type="compositionally biased region" description="Low complexity" evidence="5">
    <location>
        <begin position="433"/>
        <end position="445"/>
    </location>
</feature>
<feature type="compositionally biased region" description="Basic and acidic residues" evidence="5">
    <location>
        <begin position="454"/>
        <end position="467"/>
    </location>
</feature>
<feature type="compositionally biased region" description="Polar residues" evidence="5">
    <location>
        <begin position="472"/>
        <end position="483"/>
    </location>
</feature>
<feature type="compositionally biased region" description="Pro residues" evidence="5">
    <location>
        <begin position="522"/>
        <end position="532"/>
    </location>
</feature>
<feature type="compositionally biased region" description="Low complexity" evidence="5">
    <location>
        <begin position="533"/>
        <end position="544"/>
    </location>
</feature>
<feature type="compositionally biased region" description="Polar residues" evidence="5">
    <location>
        <begin position="618"/>
        <end position="637"/>
    </location>
</feature>
<feature type="compositionally biased region" description="Acidic residues" evidence="5">
    <location>
        <begin position="1029"/>
        <end position="1046"/>
    </location>
</feature>
<feature type="active site" description="Proton donor" evidence="1">
    <location>
        <position position="752"/>
    </location>
</feature>
<feature type="binding site" evidence="2">
    <location>
        <position position="752"/>
    </location>
    <ligand>
        <name>AMP</name>
        <dbReference type="ChEBI" id="CHEBI:456215"/>
    </ligand>
</feature>
<feature type="binding site" evidence="2">
    <location>
        <position position="756"/>
    </location>
    <ligand>
        <name>Mn(2+)</name>
        <dbReference type="ChEBI" id="CHEBI:29035"/>
    </ligand>
</feature>
<feature type="binding site" evidence="2">
    <location>
        <position position="836"/>
    </location>
    <ligand>
        <name>Mn(2+)</name>
        <dbReference type="ChEBI" id="CHEBI:29035"/>
    </ligand>
</feature>
<feature type="binding site" evidence="2">
    <location>
        <position position="837"/>
    </location>
    <ligand>
        <name>AMP</name>
        <dbReference type="ChEBI" id="CHEBI:456215"/>
    </ligand>
</feature>
<feature type="binding site" evidence="2">
    <location>
        <position position="837"/>
    </location>
    <ligand>
        <name>Mg(2+)</name>
        <dbReference type="ChEBI" id="CHEBI:18420"/>
    </ligand>
</feature>
<feature type="binding site" evidence="2">
    <location>
        <position position="837"/>
    </location>
    <ligand>
        <name>Mn(2+)</name>
        <dbReference type="ChEBI" id="CHEBI:29035"/>
    </ligand>
</feature>
<feature type="binding site" evidence="2">
    <location>
        <position position="950"/>
    </location>
    <ligand>
        <name>AMP</name>
        <dbReference type="ChEBI" id="CHEBI:456215"/>
    </ligand>
</feature>
<feature type="binding site" evidence="2">
    <location>
        <position position="950"/>
    </location>
    <ligand>
        <name>Mn(2+)</name>
        <dbReference type="ChEBI" id="CHEBI:29035"/>
    </ligand>
</feature>
<feature type="binding site" evidence="2">
    <location>
        <position position="1001"/>
    </location>
    <ligand>
        <name>AMP</name>
        <dbReference type="ChEBI" id="CHEBI:456215"/>
    </ligand>
</feature>
<feature type="modified residue" description="Phosphoserine" evidence="2">
    <location>
        <position position="310"/>
    </location>
</feature>
<feature type="modified residue" description="Phosphoserine" evidence="10">
    <location>
        <position position="492"/>
    </location>
</feature>
<feature type="modified residue" description="Phosphoserine" evidence="10">
    <location>
        <position position="520"/>
    </location>
</feature>
<feature type="modified residue" description="Phosphoserine" evidence="10">
    <location>
        <position position="524"/>
    </location>
</feature>
<feature type="modified residue" description="Phosphoserine" evidence="10">
    <location>
        <position position="533"/>
    </location>
</feature>
<feature type="modified residue" description="Phosphoserine" evidence="10">
    <location>
        <position position="1033"/>
    </location>
</feature>
<feature type="modified residue" description="Phosphothreonine" evidence="10">
    <location>
        <position position="1036"/>
    </location>
</feature>
<feature type="cross-link" description="Glycyl lysine isopeptide (Lys-Gly) (interchain with G-Cter in SUMO2)" evidence="2">
    <location>
        <position position="1120"/>
    </location>
</feature>
<name>PDE3A_MOUSE</name>
<organism>
    <name type="scientific">Mus musculus</name>
    <name type="common">Mouse</name>
    <dbReference type="NCBI Taxonomy" id="10090"/>
    <lineage>
        <taxon>Eukaryota</taxon>
        <taxon>Metazoa</taxon>
        <taxon>Chordata</taxon>
        <taxon>Craniata</taxon>
        <taxon>Vertebrata</taxon>
        <taxon>Euteleostomi</taxon>
        <taxon>Mammalia</taxon>
        <taxon>Eutheria</taxon>
        <taxon>Euarchontoglires</taxon>
        <taxon>Glires</taxon>
        <taxon>Rodentia</taxon>
        <taxon>Myomorpha</taxon>
        <taxon>Muroidea</taxon>
        <taxon>Muridae</taxon>
        <taxon>Murinae</taxon>
        <taxon>Mus</taxon>
        <taxon>Mus</taxon>
    </lineage>
</organism>
<evidence type="ECO:0000250" key="1">
    <source>
        <dbReference type="UniProtKB" id="O76083"/>
    </source>
</evidence>
<evidence type="ECO:0000250" key="2">
    <source>
        <dbReference type="UniProtKB" id="Q14432"/>
    </source>
</evidence>
<evidence type="ECO:0000255" key="3"/>
<evidence type="ECO:0000255" key="4">
    <source>
        <dbReference type="PROSITE-ProRule" id="PRU01192"/>
    </source>
</evidence>
<evidence type="ECO:0000256" key="5">
    <source>
        <dbReference type="SAM" id="MobiDB-lite"/>
    </source>
</evidence>
<evidence type="ECO:0000269" key="6">
    <source>
    </source>
</evidence>
<evidence type="ECO:0000305" key="7"/>
<evidence type="ECO:0000305" key="8">
    <source>
    </source>
</evidence>
<evidence type="ECO:0000312" key="9">
    <source>
        <dbReference type="MGI" id="MGI:1860764"/>
    </source>
</evidence>
<evidence type="ECO:0007744" key="10">
    <source>
    </source>
</evidence>
<reference key="1">
    <citation type="journal article" date="2001" name="Biol. Reprod.">
        <title>Cloning and characterization of the cyclic guanosine monophosphate-inhibited phosphodiesterase PDE3A expressed in mouse oocyte.</title>
        <authorList>
            <person name="Shitsukawa K."/>
            <person name="Andersen C.B."/>
            <person name="Richard F.J."/>
            <person name="Horner A.K."/>
            <person name="Wiersma A."/>
            <person name="van Duin M."/>
            <person name="Conti M."/>
        </authorList>
    </citation>
    <scope>NUCLEOTIDE SEQUENCE [MRNA]</scope>
    <scope>FUNCTION</scope>
    <scope>CATALYTIC ACTIVITY</scope>
    <scope>BIOPHYSICOCHEMICAL PROPERTIES</scope>
    <scope>SUBCELLULAR LOCATION</scope>
    <source>
        <strain>C57BL/6J</strain>
        <tissue>Ovary</tissue>
    </source>
</reference>
<reference key="2">
    <citation type="journal article" date="2010" name="Cell">
        <title>A tissue-specific atlas of mouse protein phosphorylation and expression.</title>
        <authorList>
            <person name="Huttlin E.L."/>
            <person name="Jedrychowski M.P."/>
            <person name="Elias J.E."/>
            <person name="Goswami T."/>
            <person name="Rad R."/>
            <person name="Beausoleil S.A."/>
            <person name="Villen J."/>
            <person name="Haas W."/>
            <person name="Sowa M.E."/>
            <person name="Gygi S.P."/>
        </authorList>
    </citation>
    <scope>PHOSPHORYLATION [LARGE SCALE ANALYSIS] AT SER-492; SER-520; SER-524; SER-533; SER-1033 AND THR-1036</scope>
    <scope>IDENTIFICATION BY MASS SPECTROMETRY [LARGE SCALE ANALYSIS]</scope>
    <source>
        <tissue>Brain</tissue>
        <tissue>Brown adipose tissue</tissue>
        <tissue>Heart</tissue>
        <tissue>Kidney</tissue>
        <tissue>Lung</tissue>
        <tissue>Spleen</tissue>
    </source>
</reference>
<keyword id="KW-0114">cAMP</keyword>
<keyword id="KW-0140">cGMP</keyword>
<keyword id="KW-0963">Cytoplasm</keyword>
<keyword id="KW-0378">Hydrolase</keyword>
<keyword id="KW-1017">Isopeptide bond</keyword>
<keyword id="KW-0460">Magnesium</keyword>
<keyword id="KW-0464">Manganese</keyword>
<keyword id="KW-0472">Membrane</keyword>
<keyword id="KW-0479">Metal-binding</keyword>
<keyword id="KW-0597">Phosphoprotein</keyword>
<keyword id="KW-1185">Reference proteome</keyword>
<keyword id="KW-0812">Transmembrane</keyword>
<keyword id="KW-1133">Transmembrane helix</keyword>
<keyword id="KW-0832">Ubl conjugation</keyword>
<proteinExistence type="evidence at protein level"/>
<accession>Q9Z0X4</accession>